<evidence type="ECO:0000255" key="1">
    <source>
        <dbReference type="HAMAP-Rule" id="MF_00170"/>
    </source>
</evidence>
<feature type="chain" id="PRO_1000194684" description="Ribose-5-phosphate isomerase A">
    <location>
        <begin position="1"/>
        <end position="219"/>
    </location>
</feature>
<feature type="active site" description="Proton acceptor" evidence="1">
    <location>
        <position position="103"/>
    </location>
</feature>
<feature type="binding site" evidence="1">
    <location>
        <begin position="28"/>
        <end position="31"/>
    </location>
    <ligand>
        <name>substrate</name>
    </ligand>
</feature>
<feature type="binding site" evidence="1">
    <location>
        <begin position="81"/>
        <end position="84"/>
    </location>
    <ligand>
        <name>substrate</name>
    </ligand>
</feature>
<feature type="binding site" evidence="1">
    <location>
        <begin position="94"/>
        <end position="97"/>
    </location>
    <ligand>
        <name>substrate</name>
    </ligand>
</feature>
<feature type="binding site" evidence="1">
    <location>
        <position position="121"/>
    </location>
    <ligand>
        <name>substrate</name>
    </ligand>
</feature>
<sequence>MNTDALKKMAAEAALRYIQPGMVVGVGTGSTTNFFIEALGAAKIHVDGYVASSIATENRLKAQGLNVLELNATGDIPVYIDGADEADPHFRLIKGGGGALTREKIVASAARLFVCIADDSKDRPMLGKFPLPVEVIPFARSFVARQLVKIGGSPTLRSGITTDNGNVILDVTGLDFSDPLRMEETINAIPGVLDNGIFAHRRADVMLFGSAGGVIERKA</sequence>
<dbReference type="EC" id="5.3.1.6" evidence="1"/>
<dbReference type="EMBL" id="CP001219">
    <property type="protein sequence ID" value="ACK79967.1"/>
    <property type="molecule type" value="Genomic_DNA"/>
</dbReference>
<dbReference type="RefSeq" id="WP_009560936.1">
    <property type="nucleotide sequence ID" value="NC_011761.1"/>
</dbReference>
<dbReference type="SMR" id="B7J5S6"/>
<dbReference type="STRING" id="243159.AFE_0629"/>
<dbReference type="PaxDb" id="243159-AFE_0629"/>
<dbReference type="GeneID" id="65279980"/>
<dbReference type="KEGG" id="afr:AFE_0629"/>
<dbReference type="eggNOG" id="COG0120">
    <property type="taxonomic scope" value="Bacteria"/>
</dbReference>
<dbReference type="HOGENOM" id="CLU_056590_1_1_6"/>
<dbReference type="UniPathway" id="UPA00115">
    <property type="reaction ID" value="UER00412"/>
</dbReference>
<dbReference type="Proteomes" id="UP000001362">
    <property type="component" value="Chromosome"/>
</dbReference>
<dbReference type="GO" id="GO:0005829">
    <property type="term" value="C:cytosol"/>
    <property type="evidence" value="ECO:0007669"/>
    <property type="project" value="TreeGrafter"/>
</dbReference>
<dbReference type="GO" id="GO:0004751">
    <property type="term" value="F:ribose-5-phosphate isomerase activity"/>
    <property type="evidence" value="ECO:0007669"/>
    <property type="project" value="UniProtKB-UniRule"/>
</dbReference>
<dbReference type="GO" id="GO:0006014">
    <property type="term" value="P:D-ribose metabolic process"/>
    <property type="evidence" value="ECO:0007669"/>
    <property type="project" value="TreeGrafter"/>
</dbReference>
<dbReference type="GO" id="GO:0009052">
    <property type="term" value="P:pentose-phosphate shunt, non-oxidative branch"/>
    <property type="evidence" value="ECO:0007669"/>
    <property type="project" value="UniProtKB-UniRule"/>
</dbReference>
<dbReference type="CDD" id="cd01398">
    <property type="entry name" value="RPI_A"/>
    <property type="match status" value="1"/>
</dbReference>
<dbReference type="FunFam" id="3.30.70.260:FF:000004">
    <property type="entry name" value="Ribose-5-phosphate isomerase A"/>
    <property type="match status" value="1"/>
</dbReference>
<dbReference type="FunFam" id="3.40.50.1360:FF:000001">
    <property type="entry name" value="Ribose-5-phosphate isomerase A"/>
    <property type="match status" value="1"/>
</dbReference>
<dbReference type="Gene3D" id="3.30.70.260">
    <property type="match status" value="1"/>
</dbReference>
<dbReference type="Gene3D" id="3.40.50.1360">
    <property type="match status" value="1"/>
</dbReference>
<dbReference type="HAMAP" id="MF_00170">
    <property type="entry name" value="Rib_5P_isom_A"/>
    <property type="match status" value="1"/>
</dbReference>
<dbReference type="InterPro" id="IPR037171">
    <property type="entry name" value="NagB/RpiA_transferase-like"/>
</dbReference>
<dbReference type="InterPro" id="IPR020672">
    <property type="entry name" value="Ribose5P_isomerase_typA_subgr"/>
</dbReference>
<dbReference type="InterPro" id="IPR004788">
    <property type="entry name" value="Ribose5P_isomerase_type_A"/>
</dbReference>
<dbReference type="NCBIfam" id="NF001924">
    <property type="entry name" value="PRK00702.1"/>
    <property type="match status" value="1"/>
</dbReference>
<dbReference type="NCBIfam" id="TIGR00021">
    <property type="entry name" value="rpiA"/>
    <property type="match status" value="1"/>
</dbReference>
<dbReference type="PANTHER" id="PTHR11934">
    <property type="entry name" value="RIBOSE-5-PHOSPHATE ISOMERASE"/>
    <property type="match status" value="1"/>
</dbReference>
<dbReference type="PANTHER" id="PTHR11934:SF0">
    <property type="entry name" value="RIBOSE-5-PHOSPHATE ISOMERASE"/>
    <property type="match status" value="1"/>
</dbReference>
<dbReference type="Pfam" id="PF06026">
    <property type="entry name" value="Rib_5-P_isom_A"/>
    <property type="match status" value="1"/>
</dbReference>
<dbReference type="SUPFAM" id="SSF75445">
    <property type="entry name" value="D-ribose-5-phosphate isomerase (RpiA), lid domain"/>
    <property type="match status" value="1"/>
</dbReference>
<dbReference type="SUPFAM" id="SSF100950">
    <property type="entry name" value="NagB/RpiA/CoA transferase-like"/>
    <property type="match status" value="1"/>
</dbReference>
<organism>
    <name type="scientific">Acidithiobacillus ferrooxidans (strain ATCC 23270 / DSM 14882 / CIP 104768 / NCIMB 8455)</name>
    <name type="common">Ferrobacillus ferrooxidans (strain ATCC 23270)</name>
    <dbReference type="NCBI Taxonomy" id="243159"/>
    <lineage>
        <taxon>Bacteria</taxon>
        <taxon>Pseudomonadati</taxon>
        <taxon>Pseudomonadota</taxon>
        <taxon>Acidithiobacillia</taxon>
        <taxon>Acidithiobacillales</taxon>
        <taxon>Acidithiobacillaceae</taxon>
        <taxon>Acidithiobacillus</taxon>
    </lineage>
</organism>
<comment type="function">
    <text evidence="1">Catalyzes the reversible conversion of ribose-5-phosphate to ribulose 5-phosphate.</text>
</comment>
<comment type="catalytic activity">
    <reaction evidence="1">
        <text>aldehydo-D-ribose 5-phosphate = D-ribulose 5-phosphate</text>
        <dbReference type="Rhea" id="RHEA:14657"/>
        <dbReference type="ChEBI" id="CHEBI:58121"/>
        <dbReference type="ChEBI" id="CHEBI:58273"/>
        <dbReference type="EC" id="5.3.1.6"/>
    </reaction>
</comment>
<comment type="pathway">
    <text evidence="1">Carbohydrate degradation; pentose phosphate pathway; D-ribose 5-phosphate from D-ribulose 5-phosphate (non-oxidative stage): step 1/1.</text>
</comment>
<comment type="subunit">
    <text evidence="1">Homodimer.</text>
</comment>
<comment type="similarity">
    <text evidence="1">Belongs to the ribose 5-phosphate isomerase family.</text>
</comment>
<accession>B7J5S6</accession>
<protein>
    <recommendedName>
        <fullName evidence="1">Ribose-5-phosphate isomerase A</fullName>
        <ecNumber evidence="1">5.3.1.6</ecNumber>
    </recommendedName>
    <alternativeName>
        <fullName evidence="1">Phosphoriboisomerase A</fullName>
        <shortName evidence="1">PRI</shortName>
    </alternativeName>
</protein>
<reference key="1">
    <citation type="journal article" date="2008" name="BMC Genomics">
        <title>Acidithiobacillus ferrooxidans metabolism: from genome sequence to industrial applications.</title>
        <authorList>
            <person name="Valdes J."/>
            <person name="Pedroso I."/>
            <person name="Quatrini R."/>
            <person name="Dodson R.J."/>
            <person name="Tettelin H."/>
            <person name="Blake R. II"/>
            <person name="Eisen J.A."/>
            <person name="Holmes D.S."/>
        </authorList>
    </citation>
    <scope>NUCLEOTIDE SEQUENCE [LARGE SCALE GENOMIC DNA]</scope>
    <source>
        <strain>ATCC 23270 / DSM 14882 / CIP 104768 / NCIMB 8455</strain>
    </source>
</reference>
<gene>
    <name evidence="1" type="primary">rpiA</name>
    <name type="ordered locus">AFE_0629</name>
</gene>
<proteinExistence type="inferred from homology"/>
<keyword id="KW-0413">Isomerase</keyword>
<keyword id="KW-1185">Reference proteome</keyword>
<name>RPIA_ACIF2</name>